<gene>
    <name evidence="1" type="primary">gatB</name>
    <name type="ordered locus">TM1040_0701</name>
</gene>
<feature type="chain" id="PRO_1000016038" description="Aspartyl/glutamyl-tRNA(Asn/Gln) amidotransferase subunit B">
    <location>
        <begin position="1"/>
        <end position="502"/>
    </location>
</feature>
<keyword id="KW-0067">ATP-binding</keyword>
<keyword id="KW-0436">Ligase</keyword>
<keyword id="KW-0547">Nucleotide-binding</keyword>
<keyword id="KW-0648">Protein biosynthesis</keyword>
<keyword id="KW-1185">Reference proteome</keyword>
<protein>
    <recommendedName>
        <fullName evidence="1">Aspartyl/glutamyl-tRNA(Asn/Gln) amidotransferase subunit B</fullName>
        <shortName evidence="1">Asp/Glu-ADT subunit B</shortName>
        <ecNumber evidence="1">6.3.5.-</ecNumber>
    </recommendedName>
</protein>
<evidence type="ECO:0000255" key="1">
    <source>
        <dbReference type="HAMAP-Rule" id="MF_00121"/>
    </source>
</evidence>
<comment type="function">
    <text evidence="1">Allows the formation of correctly charged Asn-tRNA(Asn) or Gln-tRNA(Gln) through the transamidation of misacylated Asp-tRNA(Asn) or Glu-tRNA(Gln) in organisms which lack either or both of asparaginyl-tRNA or glutaminyl-tRNA synthetases. The reaction takes place in the presence of glutamine and ATP through an activated phospho-Asp-tRNA(Asn) or phospho-Glu-tRNA(Gln).</text>
</comment>
<comment type="catalytic activity">
    <reaction evidence="1">
        <text>L-glutamyl-tRNA(Gln) + L-glutamine + ATP + H2O = L-glutaminyl-tRNA(Gln) + L-glutamate + ADP + phosphate + H(+)</text>
        <dbReference type="Rhea" id="RHEA:17521"/>
        <dbReference type="Rhea" id="RHEA-COMP:9681"/>
        <dbReference type="Rhea" id="RHEA-COMP:9684"/>
        <dbReference type="ChEBI" id="CHEBI:15377"/>
        <dbReference type="ChEBI" id="CHEBI:15378"/>
        <dbReference type="ChEBI" id="CHEBI:29985"/>
        <dbReference type="ChEBI" id="CHEBI:30616"/>
        <dbReference type="ChEBI" id="CHEBI:43474"/>
        <dbReference type="ChEBI" id="CHEBI:58359"/>
        <dbReference type="ChEBI" id="CHEBI:78520"/>
        <dbReference type="ChEBI" id="CHEBI:78521"/>
        <dbReference type="ChEBI" id="CHEBI:456216"/>
    </reaction>
</comment>
<comment type="catalytic activity">
    <reaction evidence="1">
        <text>L-aspartyl-tRNA(Asn) + L-glutamine + ATP + H2O = L-asparaginyl-tRNA(Asn) + L-glutamate + ADP + phosphate + 2 H(+)</text>
        <dbReference type="Rhea" id="RHEA:14513"/>
        <dbReference type="Rhea" id="RHEA-COMP:9674"/>
        <dbReference type="Rhea" id="RHEA-COMP:9677"/>
        <dbReference type="ChEBI" id="CHEBI:15377"/>
        <dbReference type="ChEBI" id="CHEBI:15378"/>
        <dbReference type="ChEBI" id="CHEBI:29985"/>
        <dbReference type="ChEBI" id="CHEBI:30616"/>
        <dbReference type="ChEBI" id="CHEBI:43474"/>
        <dbReference type="ChEBI" id="CHEBI:58359"/>
        <dbReference type="ChEBI" id="CHEBI:78515"/>
        <dbReference type="ChEBI" id="CHEBI:78516"/>
        <dbReference type="ChEBI" id="CHEBI:456216"/>
    </reaction>
</comment>
<comment type="subunit">
    <text evidence="1">Heterotrimer of A, B and C subunits.</text>
</comment>
<comment type="similarity">
    <text evidence="1">Belongs to the GatB/GatE family. GatB subfamily.</text>
</comment>
<reference key="1">
    <citation type="submission" date="2006-05" db="EMBL/GenBank/DDBJ databases">
        <title>Complete sequence of chromosome of Silicibacter sp. TM1040.</title>
        <authorList>
            <consortium name="US DOE Joint Genome Institute"/>
            <person name="Copeland A."/>
            <person name="Lucas S."/>
            <person name="Lapidus A."/>
            <person name="Barry K."/>
            <person name="Detter J.C."/>
            <person name="Glavina del Rio T."/>
            <person name="Hammon N."/>
            <person name="Israni S."/>
            <person name="Dalin E."/>
            <person name="Tice H."/>
            <person name="Pitluck S."/>
            <person name="Brettin T."/>
            <person name="Bruce D."/>
            <person name="Han C."/>
            <person name="Tapia R."/>
            <person name="Goodwin L."/>
            <person name="Thompson L.S."/>
            <person name="Gilna P."/>
            <person name="Schmutz J."/>
            <person name="Larimer F."/>
            <person name="Land M."/>
            <person name="Hauser L."/>
            <person name="Kyrpides N."/>
            <person name="Kim E."/>
            <person name="Belas R."/>
            <person name="Moran M.A."/>
            <person name="Buchan A."/>
            <person name="Gonzalez J.M."/>
            <person name="Schell M.A."/>
            <person name="Sun F."/>
            <person name="Richardson P."/>
        </authorList>
    </citation>
    <scope>NUCLEOTIDE SEQUENCE [LARGE SCALE GENOMIC DNA]</scope>
    <source>
        <strain>TM1040</strain>
    </source>
</reference>
<name>GATB_RUEST</name>
<proteinExistence type="inferred from homology"/>
<accession>Q1GIT2</accession>
<dbReference type="EC" id="6.3.5.-" evidence="1"/>
<dbReference type="EMBL" id="CP000377">
    <property type="protein sequence ID" value="ABF63434.1"/>
    <property type="molecule type" value="Genomic_DNA"/>
</dbReference>
<dbReference type="RefSeq" id="WP_011538046.1">
    <property type="nucleotide sequence ID" value="NC_008044.1"/>
</dbReference>
<dbReference type="SMR" id="Q1GIT2"/>
<dbReference type="STRING" id="292414.TM1040_0701"/>
<dbReference type="KEGG" id="sit:TM1040_0701"/>
<dbReference type="eggNOG" id="COG0064">
    <property type="taxonomic scope" value="Bacteria"/>
</dbReference>
<dbReference type="HOGENOM" id="CLU_019240_0_0_5"/>
<dbReference type="OrthoDB" id="9804078at2"/>
<dbReference type="Proteomes" id="UP000000636">
    <property type="component" value="Chromosome"/>
</dbReference>
<dbReference type="GO" id="GO:0050566">
    <property type="term" value="F:asparaginyl-tRNA synthase (glutamine-hydrolyzing) activity"/>
    <property type="evidence" value="ECO:0007669"/>
    <property type="project" value="RHEA"/>
</dbReference>
<dbReference type="GO" id="GO:0005524">
    <property type="term" value="F:ATP binding"/>
    <property type="evidence" value="ECO:0007669"/>
    <property type="project" value="UniProtKB-KW"/>
</dbReference>
<dbReference type="GO" id="GO:0050567">
    <property type="term" value="F:glutaminyl-tRNA synthase (glutamine-hydrolyzing) activity"/>
    <property type="evidence" value="ECO:0007669"/>
    <property type="project" value="UniProtKB-UniRule"/>
</dbReference>
<dbReference type="GO" id="GO:0070681">
    <property type="term" value="P:glutaminyl-tRNAGln biosynthesis via transamidation"/>
    <property type="evidence" value="ECO:0007669"/>
    <property type="project" value="TreeGrafter"/>
</dbReference>
<dbReference type="GO" id="GO:0006412">
    <property type="term" value="P:translation"/>
    <property type="evidence" value="ECO:0007669"/>
    <property type="project" value="UniProtKB-UniRule"/>
</dbReference>
<dbReference type="FunFam" id="1.10.10.410:FF:000001">
    <property type="entry name" value="Aspartyl/glutamyl-tRNA(Asn/Gln) amidotransferase subunit B"/>
    <property type="match status" value="1"/>
</dbReference>
<dbReference type="FunFam" id="1.10.150.380:FF:000001">
    <property type="entry name" value="Aspartyl/glutamyl-tRNA(Asn/Gln) amidotransferase subunit B"/>
    <property type="match status" value="1"/>
</dbReference>
<dbReference type="Gene3D" id="1.10.10.410">
    <property type="match status" value="1"/>
</dbReference>
<dbReference type="Gene3D" id="1.10.150.380">
    <property type="entry name" value="GatB domain, N-terminal subdomain"/>
    <property type="match status" value="1"/>
</dbReference>
<dbReference type="HAMAP" id="MF_00121">
    <property type="entry name" value="GatB"/>
    <property type="match status" value="1"/>
</dbReference>
<dbReference type="InterPro" id="IPR017959">
    <property type="entry name" value="Asn/Gln-tRNA_amidoTrfase_suB/E"/>
</dbReference>
<dbReference type="InterPro" id="IPR006075">
    <property type="entry name" value="Asn/Gln-tRNA_Trfase_suB/E_cat"/>
</dbReference>
<dbReference type="InterPro" id="IPR018027">
    <property type="entry name" value="Asn/Gln_amidotransferase"/>
</dbReference>
<dbReference type="InterPro" id="IPR003789">
    <property type="entry name" value="Asn/Gln_tRNA_amidoTrase-B-like"/>
</dbReference>
<dbReference type="InterPro" id="IPR004413">
    <property type="entry name" value="GatB"/>
</dbReference>
<dbReference type="InterPro" id="IPR042114">
    <property type="entry name" value="GatB_C_1"/>
</dbReference>
<dbReference type="InterPro" id="IPR023168">
    <property type="entry name" value="GatB_Yqey_C_2"/>
</dbReference>
<dbReference type="InterPro" id="IPR014746">
    <property type="entry name" value="Gln_synth/guanido_kin_cat_dom"/>
</dbReference>
<dbReference type="NCBIfam" id="TIGR00133">
    <property type="entry name" value="gatB"/>
    <property type="match status" value="1"/>
</dbReference>
<dbReference type="NCBIfam" id="NF004012">
    <property type="entry name" value="PRK05477.1-2"/>
    <property type="match status" value="1"/>
</dbReference>
<dbReference type="NCBIfam" id="NF004014">
    <property type="entry name" value="PRK05477.1-4"/>
    <property type="match status" value="1"/>
</dbReference>
<dbReference type="NCBIfam" id="NF004015">
    <property type="entry name" value="PRK05477.1-5"/>
    <property type="match status" value="1"/>
</dbReference>
<dbReference type="PANTHER" id="PTHR11659">
    <property type="entry name" value="GLUTAMYL-TRNA GLN AMIDOTRANSFERASE SUBUNIT B MITOCHONDRIAL AND PROKARYOTIC PET112-RELATED"/>
    <property type="match status" value="1"/>
</dbReference>
<dbReference type="PANTHER" id="PTHR11659:SF0">
    <property type="entry name" value="GLUTAMYL-TRNA(GLN) AMIDOTRANSFERASE SUBUNIT B, MITOCHONDRIAL"/>
    <property type="match status" value="1"/>
</dbReference>
<dbReference type="Pfam" id="PF02934">
    <property type="entry name" value="GatB_N"/>
    <property type="match status" value="1"/>
</dbReference>
<dbReference type="Pfam" id="PF02637">
    <property type="entry name" value="GatB_Yqey"/>
    <property type="match status" value="1"/>
</dbReference>
<dbReference type="SMART" id="SM00845">
    <property type="entry name" value="GatB_Yqey"/>
    <property type="match status" value="1"/>
</dbReference>
<dbReference type="SUPFAM" id="SSF89095">
    <property type="entry name" value="GatB/YqeY motif"/>
    <property type="match status" value="1"/>
</dbReference>
<dbReference type="SUPFAM" id="SSF55931">
    <property type="entry name" value="Glutamine synthetase/guanido kinase"/>
    <property type="match status" value="1"/>
</dbReference>
<organism>
    <name type="scientific">Ruegeria sp. (strain TM1040)</name>
    <name type="common">Silicibacter sp.</name>
    <dbReference type="NCBI Taxonomy" id="292414"/>
    <lineage>
        <taxon>Bacteria</taxon>
        <taxon>Pseudomonadati</taxon>
        <taxon>Pseudomonadota</taxon>
        <taxon>Alphaproteobacteria</taxon>
        <taxon>Rhodobacterales</taxon>
        <taxon>Roseobacteraceae</taxon>
        <taxon>Ruegeria</taxon>
    </lineage>
</organism>
<sequence>MLDLTYELPKPKVIAGAKHDWELVIGMEVHAQVSSNAKLFSGASTQFGAEPNSNVAFVDAAMPGMLPVINEYCVEQAVRTGLGLKADINLWSAFDRKNYFYPDLPQGYQISQLYHPIVGEGEVLVELGDGTARMVRIERIHMEQDAGKSIHDMDPSMSFVDLNRTGVCLMEIVSRPDIRGPEEAAAYIAKLRQIMRYLGTCDGNMQNGNLRADVNVSICRPGAYEKYQETQDFSHLGTRCEIKNMNSMRFIQQAIEVEARRQIAIVEAGGEVEQETRLYDPDKGETRSMRSKEEAHDYRYFPDPDLLPLEIEQAWVDDIKSKLPELPDEKKARFIKDFGLTDYDASVLTADLESAHYFDAVAKGRSGKLAANWVINELFGRLKKDDKDITDSPVSPAQLGGVIDLIASDAISGKIAKDLFEIVYTEGGDPAQIVEERGMKQVTDTGAIEAALDEIIAANPAQVEKAKENPKLAGWFVGQVMKATGGKANPKAVNQLVAKKLG</sequence>